<accession>B9M2S8</accession>
<keyword id="KW-0012">Acyltransferase</keyword>
<keyword id="KW-0963">Cytoplasm</keyword>
<keyword id="KW-0408">Iron</keyword>
<keyword id="KW-0479">Metal-binding</keyword>
<keyword id="KW-1185">Reference proteome</keyword>
<keyword id="KW-0808">Transferase</keyword>
<keyword id="KW-0819">tRNA processing</keyword>
<sequence length="341" mass="35916">MLLLSIESSCDETAASVVRNGREILSNIVASQISIHADYGGVVPEIASRKHLETISIVIEEALRKADLPISAIEGIAVTRGPGLAGALLVGISTAKALAYGLNIPVVGVNHIESHILAIMLESDVKFPFIALAVSGGHTHLYEVQAIGRYRTIGQTLDDAAGEAFDKVAKLMGLPYPGGALIDRLAAEGDPRAIKFPRPLMHEDNYNFSFSGLKTAVLNYVRKNPAAMEGSALNDVCASFQAAVCEVLVSKTRAAVIQSGIKRLVVAGGVACNSGLRRDMATFAETEGAELFIPSPLLCSDNAAMLAVPGDYYLCNNIACGFELDALPVWPLDAISLTGGN</sequence>
<feature type="chain" id="PRO_1000184966" description="tRNA N6-adenosine threonylcarbamoyltransferase">
    <location>
        <begin position="1"/>
        <end position="341"/>
    </location>
</feature>
<feature type="binding site" evidence="1">
    <location>
        <position position="111"/>
    </location>
    <ligand>
        <name>Fe cation</name>
        <dbReference type="ChEBI" id="CHEBI:24875"/>
    </ligand>
</feature>
<feature type="binding site" evidence="1">
    <location>
        <position position="115"/>
    </location>
    <ligand>
        <name>Fe cation</name>
        <dbReference type="ChEBI" id="CHEBI:24875"/>
    </ligand>
</feature>
<feature type="binding site" evidence="1">
    <location>
        <begin position="133"/>
        <end position="137"/>
    </location>
    <ligand>
        <name>substrate</name>
    </ligand>
</feature>
<feature type="binding site" evidence="1">
    <location>
        <position position="166"/>
    </location>
    <ligand>
        <name>substrate</name>
    </ligand>
</feature>
<feature type="binding site" evidence="1">
    <location>
        <position position="179"/>
    </location>
    <ligand>
        <name>substrate</name>
    </ligand>
</feature>
<feature type="binding site" evidence="1">
    <location>
        <position position="183"/>
    </location>
    <ligand>
        <name>substrate</name>
    </ligand>
</feature>
<feature type="binding site" evidence="1">
    <location>
        <position position="273"/>
    </location>
    <ligand>
        <name>substrate</name>
    </ligand>
</feature>
<feature type="binding site" evidence="1">
    <location>
        <position position="301"/>
    </location>
    <ligand>
        <name>Fe cation</name>
        <dbReference type="ChEBI" id="CHEBI:24875"/>
    </ligand>
</feature>
<evidence type="ECO:0000255" key="1">
    <source>
        <dbReference type="HAMAP-Rule" id="MF_01445"/>
    </source>
</evidence>
<organism>
    <name type="scientific">Geotalea daltonii (strain DSM 22248 / JCM 15807 / FRC-32)</name>
    <name type="common">Geobacter daltonii</name>
    <dbReference type="NCBI Taxonomy" id="316067"/>
    <lineage>
        <taxon>Bacteria</taxon>
        <taxon>Pseudomonadati</taxon>
        <taxon>Thermodesulfobacteriota</taxon>
        <taxon>Desulfuromonadia</taxon>
        <taxon>Geobacterales</taxon>
        <taxon>Geobacteraceae</taxon>
        <taxon>Geotalea</taxon>
    </lineage>
</organism>
<reference key="1">
    <citation type="submission" date="2009-01" db="EMBL/GenBank/DDBJ databases">
        <title>Complete sequence of Geobacter sp. FRC-32.</title>
        <authorList>
            <consortium name="US DOE Joint Genome Institute"/>
            <person name="Lucas S."/>
            <person name="Copeland A."/>
            <person name="Lapidus A."/>
            <person name="Glavina del Rio T."/>
            <person name="Dalin E."/>
            <person name="Tice H."/>
            <person name="Bruce D."/>
            <person name="Goodwin L."/>
            <person name="Pitluck S."/>
            <person name="Saunders E."/>
            <person name="Brettin T."/>
            <person name="Detter J.C."/>
            <person name="Han C."/>
            <person name="Larimer F."/>
            <person name="Land M."/>
            <person name="Hauser L."/>
            <person name="Kyrpides N."/>
            <person name="Ovchinnikova G."/>
            <person name="Kostka J."/>
            <person name="Richardson P."/>
        </authorList>
    </citation>
    <scope>NUCLEOTIDE SEQUENCE [LARGE SCALE GENOMIC DNA]</scope>
    <source>
        <strain>DSM 22248 / JCM 15807 / FRC-32</strain>
    </source>
</reference>
<protein>
    <recommendedName>
        <fullName evidence="1">tRNA N6-adenosine threonylcarbamoyltransferase</fullName>
        <ecNumber evidence="1">2.3.1.234</ecNumber>
    </recommendedName>
    <alternativeName>
        <fullName evidence="1">N6-L-threonylcarbamoyladenine synthase</fullName>
        <shortName evidence="1">t(6)A synthase</shortName>
    </alternativeName>
    <alternativeName>
        <fullName evidence="1">t(6)A37 threonylcarbamoyladenosine biosynthesis protein TsaD</fullName>
    </alternativeName>
    <alternativeName>
        <fullName evidence="1">tRNA threonylcarbamoyladenosine biosynthesis protein TsaD</fullName>
    </alternativeName>
</protein>
<proteinExistence type="inferred from homology"/>
<gene>
    <name evidence="1" type="primary">tsaD</name>
    <name type="synonym">gcp</name>
    <name type="ordered locus">Geob_2931</name>
</gene>
<name>TSAD_GEODF</name>
<dbReference type="EC" id="2.3.1.234" evidence="1"/>
<dbReference type="EMBL" id="CP001390">
    <property type="protein sequence ID" value="ACM21274.1"/>
    <property type="molecule type" value="Genomic_DNA"/>
</dbReference>
<dbReference type="RefSeq" id="WP_012648002.1">
    <property type="nucleotide sequence ID" value="NC_011979.1"/>
</dbReference>
<dbReference type="SMR" id="B9M2S8"/>
<dbReference type="STRING" id="316067.Geob_2931"/>
<dbReference type="KEGG" id="geo:Geob_2931"/>
<dbReference type="eggNOG" id="COG0533">
    <property type="taxonomic scope" value="Bacteria"/>
</dbReference>
<dbReference type="HOGENOM" id="CLU_023208_0_2_7"/>
<dbReference type="OrthoDB" id="9806197at2"/>
<dbReference type="Proteomes" id="UP000007721">
    <property type="component" value="Chromosome"/>
</dbReference>
<dbReference type="GO" id="GO:0005737">
    <property type="term" value="C:cytoplasm"/>
    <property type="evidence" value="ECO:0007669"/>
    <property type="project" value="UniProtKB-SubCell"/>
</dbReference>
<dbReference type="GO" id="GO:0005506">
    <property type="term" value="F:iron ion binding"/>
    <property type="evidence" value="ECO:0007669"/>
    <property type="project" value="UniProtKB-UniRule"/>
</dbReference>
<dbReference type="GO" id="GO:0061711">
    <property type="term" value="F:N(6)-L-threonylcarbamoyladenine synthase activity"/>
    <property type="evidence" value="ECO:0007669"/>
    <property type="project" value="UniProtKB-EC"/>
</dbReference>
<dbReference type="GO" id="GO:0002949">
    <property type="term" value="P:tRNA threonylcarbamoyladenosine modification"/>
    <property type="evidence" value="ECO:0007669"/>
    <property type="project" value="UniProtKB-UniRule"/>
</dbReference>
<dbReference type="CDD" id="cd24133">
    <property type="entry name" value="ASKHA_NBD_TsaD_bac"/>
    <property type="match status" value="1"/>
</dbReference>
<dbReference type="FunFam" id="3.30.420.40:FF:000012">
    <property type="entry name" value="tRNA N6-adenosine threonylcarbamoyltransferase"/>
    <property type="match status" value="1"/>
</dbReference>
<dbReference type="FunFam" id="3.30.420.40:FF:000040">
    <property type="entry name" value="tRNA N6-adenosine threonylcarbamoyltransferase"/>
    <property type="match status" value="1"/>
</dbReference>
<dbReference type="Gene3D" id="3.30.420.40">
    <property type="match status" value="2"/>
</dbReference>
<dbReference type="HAMAP" id="MF_01445">
    <property type="entry name" value="TsaD"/>
    <property type="match status" value="1"/>
</dbReference>
<dbReference type="InterPro" id="IPR043129">
    <property type="entry name" value="ATPase_NBD"/>
</dbReference>
<dbReference type="InterPro" id="IPR000905">
    <property type="entry name" value="Gcp-like_dom"/>
</dbReference>
<dbReference type="InterPro" id="IPR017861">
    <property type="entry name" value="KAE1/TsaD"/>
</dbReference>
<dbReference type="InterPro" id="IPR017860">
    <property type="entry name" value="Peptidase_M22_CS"/>
</dbReference>
<dbReference type="InterPro" id="IPR022450">
    <property type="entry name" value="TsaD"/>
</dbReference>
<dbReference type="NCBIfam" id="TIGR00329">
    <property type="entry name" value="gcp_kae1"/>
    <property type="match status" value="1"/>
</dbReference>
<dbReference type="NCBIfam" id="TIGR03723">
    <property type="entry name" value="T6A_TsaD_YgjD"/>
    <property type="match status" value="1"/>
</dbReference>
<dbReference type="PANTHER" id="PTHR11735">
    <property type="entry name" value="TRNA N6-ADENOSINE THREONYLCARBAMOYLTRANSFERASE"/>
    <property type="match status" value="1"/>
</dbReference>
<dbReference type="PANTHER" id="PTHR11735:SF6">
    <property type="entry name" value="TRNA N6-ADENOSINE THREONYLCARBAMOYLTRANSFERASE, MITOCHONDRIAL"/>
    <property type="match status" value="1"/>
</dbReference>
<dbReference type="Pfam" id="PF00814">
    <property type="entry name" value="TsaD"/>
    <property type="match status" value="1"/>
</dbReference>
<dbReference type="PRINTS" id="PR00789">
    <property type="entry name" value="OSIALOPTASE"/>
</dbReference>
<dbReference type="SUPFAM" id="SSF53067">
    <property type="entry name" value="Actin-like ATPase domain"/>
    <property type="match status" value="2"/>
</dbReference>
<dbReference type="PROSITE" id="PS01016">
    <property type="entry name" value="GLYCOPROTEASE"/>
    <property type="match status" value="1"/>
</dbReference>
<comment type="function">
    <text evidence="1">Required for the formation of a threonylcarbamoyl group on adenosine at position 37 (t(6)A37) in tRNAs that read codons beginning with adenine. Is involved in the transfer of the threonylcarbamoyl moiety of threonylcarbamoyl-AMP (TC-AMP) to the N6 group of A37, together with TsaE and TsaB. TsaD likely plays a direct catalytic role in this reaction.</text>
</comment>
<comment type="catalytic activity">
    <reaction evidence="1">
        <text>L-threonylcarbamoyladenylate + adenosine(37) in tRNA = N(6)-L-threonylcarbamoyladenosine(37) in tRNA + AMP + H(+)</text>
        <dbReference type="Rhea" id="RHEA:37059"/>
        <dbReference type="Rhea" id="RHEA-COMP:10162"/>
        <dbReference type="Rhea" id="RHEA-COMP:10163"/>
        <dbReference type="ChEBI" id="CHEBI:15378"/>
        <dbReference type="ChEBI" id="CHEBI:73682"/>
        <dbReference type="ChEBI" id="CHEBI:74411"/>
        <dbReference type="ChEBI" id="CHEBI:74418"/>
        <dbReference type="ChEBI" id="CHEBI:456215"/>
        <dbReference type="EC" id="2.3.1.234"/>
    </reaction>
</comment>
<comment type="cofactor">
    <cofactor evidence="1">
        <name>Fe(2+)</name>
        <dbReference type="ChEBI" id="CHEBI:29033"/>
    </cofactor>
    <text evidence="1">Binds 1 Fe(2+) ion per subunit.</text>
</comment>
<comment type="subcellular location">
    <subcellularLocation>
        <location evidence="1">Cytoplasm</location>
    </subcellularLocation>
</comment>
<comment type="similarity">
    <text evidence="1">Belongs to the KAE1 / TsaD family.</text>
</comment>